<proteinExistence type="inferred from homology"/>
<gene>
    <name type="primary">mltA</name>
    <name type="ordered locus">BUsg_442</name>
</gene>
<name>MLTA_BUCAP</name>
<keyword id="KW-0961">Cell wall biogenesis/degradation</keyword>
<keyword id="KW-0456">Lyase</keyword>
<sequence>MLNSCINKIKKKKNIKKIILMLIFIFSVNFFTKNTNQGKQYEDKLNKDFTNIKKINIKNKLVNQKEFLLQLEKIKIFSPNLYSKNISIYNAILKWLKKRAEINELNKFRIKLFQMKGVDQYGNVKITGYYTPIVKASKIKKNNFIYPIYRTPSNFKKNEKLPQRKDIYNGFLKKEYILAYSDSLINNFIMEIQGSGFIDYGDNKPLIFFGYAKKNNWPYTSIGQILIKNGDIQKKNISMNTIKNWCTHHTQKEIQNLLEKNKSFVFFQETKRKEVYGSSAVPLVEKAAIAVDKSVIKIGSVVLVKIPVLDKNGIFIHKYEMHLLIALDVGGVIKGQHFDVYQGIGEKAGKLAGFYNHYGYAWVLKI</sequence>
<reference key="1">
    <citation type="journal article" date="2002" name="Science">
        <title>50 million years of genomic stasis in endosymbiotic bacteria.</title>
        <authorList>
            <person name="Tamas I."/>
            <person name="Klasson L."/>
            <person name="Canbaeck B."/>
            <person name="Naeslund A.K."/>
            <person name="Eriksson A.-S."/>
            <person name="Wernegreen J.J."/>
            <person name="Sandstroem J.P."/>
            <person name="Moran N.A."/>
            <person name="Andersson S.G.E."/>
        </authorList>
    </citation>
    <scope>NUCLEOTIDE SEQUENCE [LARGE SCALE GENOMIC DNA]</scope>
    <source>
        <strain>Sg</strain>
    </source>
</reference>
<evidence type="ECO:0000250" key="1"/>
<accession>Q8K9A7</accession>
<organism>
    <name type="scientific">Buchnera aphidicola subsp. Schizaphis graminum (strain Sg)</name>
    <dbReference type="NCBI Taxonomy" id="198804"/>
    <lineage>
        <taxon>Bacteria</taxon>
        <taxon>Pseudomonadati</taxon>
        <taxon>Pseudomonadota</taxon>
        <taxon>Gammaproteobacteria</taxon>
        <taxon>Enterobacterales</taxon>
        <taxon>Erwiniaceae</taxon>
        <taxon>Buchnera</taxon>
    </lineage>
</organism>
<comment type="function">
    <text evidence="1">Murein-degrading enzyme. May play a role in recycling of muropeptides during cell elongation and/or cell division (By similarity).</text>
</comment>
<comment type="catalytic activity">
    <reaction>
        <text>Exolytic cleavage of the (1-&gt;4)-beta-glycosidic linkage between N-acetylmuramic acid (MurNAc) and N-acetylglucosamine (GlcNAc) residues in peptidoglycan, from either the reducing or the non-reducing ends of the peptidoglycan chains, with concomitant formation of a 1,6-anhydrobond in the MurNAc residue.</text>
        <dbReference type="EC" id="4.2.2.n1"/>
    </reaction>
</comment>
<comment type="subcellular location">
    <text>In closely related bacteria this protein is attached to the outer membrane by a lipid anchor. This is apparently not the case here.</text>
</comment>
<protein>
    <recommendedName>
        <fullName>Membrane-bound lytic murein transglycosylase A homolog</fullName>
        <ecNumber>4.2.2.n1</ecNumber>
    </recommendedName>
    <alternativeName>
        <fullName>Murein hydrolase A</fullName>
    </alternativeName>
</protein>
<feature type="chain" id="PRO_0000196567" description="Membrane-bound lytic murein transglycosylase A homolog">
    <location>
        <begin position="1"/>
        <end position="366"/>
    </location>
</feature>
<dbReference type="EC" id="4.2.2.n1"/>
<dbReference type="EMBL" id="AE013218">
    <property type="protein sequence ID" value="AAM67985.1"/>
    <property type="molecule type" value="Genomic_DNA"/>
</dbReference>
<dbReference type="RefSeq" id="WP_011053952.1">
    <property type="nucleotide sequence ID" value="NC_004061.1"/>
</dbReference>
<dbReference type="SMR" id="Q8K9A7"/>
<dbReference type="STRING" id="198804.BUsg_442"/>
<dbReference type="CAZy" id="GH102">
    <property type="family name" value="Glycoside Hydrolase Family 102"/>
</dbReference>
<dbReference type="GeneID" id="93003915"/>
<dbReference type="KEGG" id="bas:BUsg_442"/>
<dbReference type="eggNOG" id="COG2821">
    <property type="taxonomic scope" value="Bacteria"/>
</dbReference>
<dbReference type="HOGENOM" id="CLU_037751_2_0_6"/>
<dbReference type="Proteomes" id="UP000000416">
    <property type="component" value="Chromosome"/>
</dbReference>
<dbReference type="GO" id="GO:0019867">
    <property type="term" value="C:outer membrane"/>
    <property type="evidence" value="ECO:0007669"/>
    <property type="project" value="InterPro"/>
</dbReference>
<dbReference type="GO" id="GO:0004553">
    <property type="term" value="F:hydrolase activity, hydrolyzing O-glycosyl compounds"/>
    <property type="evidence" value="ECO:0007669"/>
    <property type="project" value="InterPro"/>
</dbReference>
<dbReference type="GO" id="GO:0008933">
    <property type="term" value="F:peptidoglycan lytic transglycosylase activity"/>
    <property type="evidence" value="ECO:0007669"/>
    <property type="project" value="TreeGrafter"/>
</dbReference>
<dbReference type="GO" id="GO:0071555">
    <property type="term" value="P:cell wall organization"/>
    <property type="evidence" value="ECO:0007669"/>
    <property type="project" value="UniProtKB-KW"/>
</dbReference>
<dbReference type="GO" id="GO:0009253">
    <property type="term" value="P:peptidoglycan catabolic process"/>
    <property type="evidence" value="ECO:0007669"/>
    <property type="project" value="TreeGrafter"/>
</dbReference>
<dbReference type="GO" id="GO:0009254">
    <property type="term" value="P:peptidoglycan turnover"/>
    <property type="evidence" value="ECO:0007669"/>
    <property type="project" value="InterPro"/>
</dbReference>
<dbReference type="CDD" id="cd22785">
    <property type="entry name" value="DPBB_MltA-like"/>
    <property type="match status" value="1"/>
</dbReference>
<dbReference type="CDD" id="cd14668">
    <property type="entry name" value="mlta_B"/>
    <property type="match status" value="1"/>
</dbReference>
<dbReference type="Gene3D" id="2.40.240.50">
    <property type="entry name" value="Barwin-like endoglucanases"/>
    <property type="match status" value="1"/>
</dbReference>
<dbReference type="Gene3D" id="2.40.40.10">
    <property type="entry name" value="RlpA-like domain"/>
    <property type="match status" value="1"/>
</dbReference>
<dbReference type="InterPro" id="IPR010611">
    <property type="entry name" value="3D_dom"/>
</dbReference>
<dbReference type="InterPro" id="IPR026044">
    <property type="entry name" value="MltA"/>
</dbReference>
<dbReference type="InterPro" id="IPR005300">
    <property type="entry name" value="MltA_B"/>
</dbReference>
<dbReference type="InterPro" id="IPR036908">
    <property type="entry name" value="RlpA-like_sf"/>
</dbReference>
<dbReference type="NCBIfam" id="NF008366">
    <property type="entry name" value="PRK11162.1"/>
    <property type="match status" value="1"/>
</dbReference>
<dbReference type="PANTHER" id="PTHR30124">
    <property type="entry name" value="MEMBRANE-BOUND LYTIC MUREIN TRANSGLYCOSYLASE A"/>
    <property type="match status" value="1"/>
</dbReference>
<dbReference type="PANTHER" id="PTHR30124:SF0">
    <property type="entry name" value="MEMBRANE-BOUND LYTIC MUREIN TRANSGLYCOSYLASE A"/>
    <property type="match status" value="1"/>
</dbReference>
<dbReference type="Pfam" id="PF06725">
    <property type="entry name" value="3D"/>
    <property type="match status" value="1"/>
</dbReference>
<dbReference type="Pfam" id="PF03562">
    <property type="entry name" value="MltA"/>
    <property type="match status" value="1"/>
</dbReference>
<dbReference type="SMART" id="SM00925">
    <property type="entry name" value="MltA"/>
    <property type="match status" value="1"/>
</dbReference>
<dbReference type="SUPFAM" id="SSF50685">
    <property type="entry name" value="Barwin-like endoglucanases"/>
    <property type="match status" value="1"/>
</dbReference>